<organism>
    <name type="scientific">Pyrococcus horikoshii (strain ATCC 700860 / DSM 12428 / JCM 9974 / NBRC 100139 / OT-3)</name>
    <dbReference type="NCBI Taxonomy" id="70601"/>
    <lineage>
        <taxon>Archaea</taxon>
        <taxon>Methanobacteriati</taxon>
        <taxon>Methanobacteriota</taxon>
        <taxon>Thermococci</taxon>
        <taxon>Thermococcales</taxon>
        <taxon>Thermococcaceae</taxon>
        <taxon>Pyrococcus</taxon>
    </lineage>
</organism>
<dbReference type="EC" id="6.3.4.2" evidence="1"/>
<dbReference type="EMBL" id="BA000001">
    <property type="protein sequence ID" value="BAA30911.1"/>
    <property type="status" value="ALT_INIT"/>
    <property type="molecule type" value="Genomic_DNA"/>
</dbReference>
<dbReference type="PIR" id="H71189">
    <property type="entry name" value="H71189"/>
</dbReference>
<dbReference type="RefSeq" id="WP_010885855.1">
    <property type="nucleotide sequence ID" value="NC_000961.1"/>
</dbReference>
<dbReference type="SMR" id="O59456"/>
<dbReference type="STRING" id="70601.gene:9378794"/>
<dbReference type="MEROPS" id="C26.964"/>
<dbReference type="EnsemblBacteria" id="BAA30911">
    <property type="protein sequence ID" value="BAA30911"/>
    <property type="gene ID" value="BAA30911"/>
</dbReference>
<dbReference type="GeneID" id="1442637"/>
<dbReference type="KEGG" id="pho:PH1792"/>
<dbReference type="eggNOG" id="arCOG00063">
    <property type="taxonomic scope" value="Archaea"/>
</dbReference>
<dbReference type="OrthoDB" id="52769at2157"/>
<dbReference type="UniPathway" id="UPA00159">
    <property type="reaction ID" value="UER00277"/>
</dbReference>
<dbReference type="Proteomes" id="UP000000752">
    <property type="component" value="Chromosome"/>
</dbReference>
<dbReference type="GO" id="GO:0005524">
    <property type="term" value="F:ATP binding"/>
    <property type="evidence" value="ECO:0007669"/>
    <property type="project" value="UniProtKB-KW"/>
</dbReference>
<dbReference type="GO" id="GO:0003883">
    <property type="term" value="F:CTP synthase activity"/>
    <property type="evidence" value="ECO:0007669"/>
    <property type="project" value="UniProtKB-UniRule"/>
</dbReference>
<dbReference type="GO" id="GO:0004359">
    <property type="term" value="F:glutaminase activity"/>
    <property type="evidence" value="ECO:0007669"/>
    <property type="project" value="RHEA"/>
</dbReference>
<dbReference type="GO" id="GO:0042802">
    <property type="term" value="F:identical protein binding"/>
    <property type="evidence" value="ECO:0007669"/>
    <property type="project" value="TreeGrafter"/>
</dbReference>
<dbReference type="GO" id="GO:0046872">
    <property type="term" value="F:metal ion binding"/>
    <property type="evidence" value="ECO:0007669"/>
    <property type="project" value="UniProtKB-KW"/>
</dbReference>
<dbReference type="GO" id="GO:0044210">
    <property type="term" value="P:'de novo' CTP biosynthetic process"/>
    <property type="evidence" value="ECO:0007669"/>
    <property type="project" value="UniProtKB-UniRule"/>
</dbReference>
<dbReference type="GO" id="GO:0019856">
    <property type="term" value="P:pyrimidine nucleobase biosynthetic process"/>
    <property type="evidence" value="ECO:0007669"/>
    <property type="project" value="TreeGrafter"/>
</dbReference>
<dbReference type="CDD" id="cd03113">
    <property type="entry name" value="CTPS_N"/>
    <property type="match status" value="1"/>
</dbReference>
<dbReference type="CDD" id="cd01746">
    <property type="entry name" value="GATase1_CTP_Synthase"/>
    <property type="match status" value="1"/>
</dbReference>
<dbReference type="FunFam" id="3.40.50.300:FF:000009">
    <property type="entry name" value="CTP synthase"/>
    <property type="match status" value="1"/>
</dbReference>
<dbReference type="FunFam" id="3.40.50.880:FF:000002">
    <property type="entry name" value="CTP synthase"/>
    <property type="match status" value="1"/>
</dbReference>
<dbReference type="Gene3D" id="3.40.50.880">
    <property type="match status" value="1"/>
</dbReference>
<dbReference type="Gene3D" id="3.40.50.300">
    <property type="entry name" value="P-loop containing nucleotide triphosphate hydrolases"/>
    <property type="match status" value="1"/>
</dbReference>
<dbReference type="HAMAP" id="MF_01227">
    <property type="entry name" value="PyrG"/>
    <property type="match status" value="1"/>
</dbReference>
<dbReference type="InterPro" id="IPR029062">
    <property type="entry name" value="Class_I_gatase-like"/>
</dbReference>
<dbReference type="InterPro" id="IPR004468">
    <property type="entry name" value="CTP_synthase"/>
</dbReference>
<dbReference type="InterPro" id="IPR017456">
    <property type="entry name" value="CTP_synthase_N"/>
</dbReference>
<dbReference type="InterPro" id="IPR017926">
    <property type="entry name" value="GATASE"/>
</dbReference>
<dbReference type="InterPro" id="IPR033828">
    <property type="entry name" value="GATase1_CTP_Synthase"/>
</dbReference>
<dbReference type="InterPro" id="IPR027417">
    <property type="entry name" value="P-loop_NTPase"/>
</dbReference>
<dbReference type="NCBIfam" id="NF003792">
    <property type="entry name" value="PRK05380.1"/>
    <property type="match status" value="1"/>
</dbReference>
<dbReference type="NCBIfam" id="TIGR00337">
    <property type="entry name" value="PyrG"/>
    <property type="match status" value="1"/>
</dbReference>
<dbReference type="PANTHER" id="PTHR11550">
    <property type="entry name" value="CTP SYNTHASE"/>
    <property type="match status" value="1"/>
</dbReference>
<dbReference type="PANTHER" id="PTHR11550:SF0">
    <property type="entry name" value="CTP SYNTHASE-RELATED"/>
    <property type="match status" value="1"/>
</dbReference>
<dbReference type="Pfam" id="PF06418">
    <property type="entry name" value="CTP_synth_N"/>
    <property type="match status" value="1"/>
</dbReference>
<dbReference type="Pfam" id="PF00117">
    <property type="entry name" value="GATase"/>
    <property type="match status" value="1"/>
</dbReference>
<dbReference type="SUPFAM" id="SSF52317">
    <property type="entry name" value="Class I glutamine amidotransferase-like"/>
    <property type="match status" value="1"/>
</dbReference>
<dbReference type="SUPFAM" id="SSF52540">
    <property type="entry name" value="P-loop containing nucleoside triphosphate hydrolases"/>
    <property type="match status" value="1"/>
</dbReference>
<dbReference type="PROSITE" id="PS51273">
    <property type="entry name" value="GATASE_TYPE_1"/>
    <property type="match status" value="1"/>
</dbReference>
<feature type="chain" id="PRO_0000138267" description="CTP synthase">
    <location>
        <begin position="1"/>
        <end position="537"/>
    </location>
</feature>
<feature type="domain" description="Glutamine amidotransferase type-1" evidence="1">
    <location>
        <begin position="290"/>
        <end position="532"/>
    </location>
</feature>
<feature type="region of interest" description="Amidoligase domain" evidence="1">
    <location>
        <begin position="1"/>
        <end position="265"/>
    </location>
</feature>
<feature type="active site" description="Nucleophile; for glutamine hydrolysis" evidence="1">
    <location>
        <position position="378"/>
    </location>
</feature>
<feature type="active site" evidence="1">
    <location>
        <position position="505"/>
    </location>
</feature>
<feature type="active site" evidence="1">
    <location>
        <position position="507"/>
    </location>
</feature>
<feature type="binding site" evidence="1">
    <location>
        <position position="13"/>
    </location>
    <ligand>
        <name>CTP</name>
        <dbReference type="ChEBI" id="CHEBI:37563"/>
        <note>allosteric inhibitor</note>
    </ligand>
</feature>
<feature type="binding site" evidence="1">
    <location>
        <position position="13"/>
    </location>
    <ligand>
        <name>UTP</name>
        <dbReference type="ChEBI" id="CHEBI:46398"/>
    </ligand>
</feature>
<feature type="binding site" evidence="1">
    <location>
        <begin position="14"/>
        <end position="19"/>
    </location>
    <ligand>
        <name>ATP</name>
        <dbReference type="ChEBI" id="CHEBI:30616"/>
    </ligand>
</feature>
<feature type="binding site" evidence="1">
    <location>
        <position position="54"/>
    </location>
    <ligand>
        <name>L-glutamine</name>
        <dbReference type="ChEBI" id="CHEBI:58359"/>
    </ligand>
</feature>
<feature type="binding site" evidence="1">
    <location>
        <position position="71"/>
    </location>
    <ligand>
        <name>ATP</name>
        <dbReference type="ChEBI" id="CHEBI:30616"/>
    </ligand>
</feature>
<feature type="binding site" evidence="1">
    <location>
        <position position="71"/>
    </location>
    <ligand>
        <name>Mg(2+)</name>
        <dbReference type="ChEBI" id="CHEBI:18420"/>
    </ligand>
</feature>
<feature type="binding site" evidence="1">
    <location>
        <position position="139"/>
    </location>
    <ligand>
        <name>Mg(2+)</name>
        <dbReference type="ChEBI" id="CHEBI:18420"/>
    </ligand>
</feature>
<feature type="binding site" evidence="1">
    <location>
        <begin position="146"/>
        <end position="148"/>
    </location>
    <ligand>
        <name>CTP</name>
        <dbReference type="ChEBI" id="CHEBI:37563"/>
        <note>allosteric inhibitor</note>
    </ligand>
</feature>
<feature type="binding site" evidence="1">
    <location>
        <begin position="186"/>
        <end position="191"/>
    </location>
    <ligand>
        <name>CTP</name>
        <dbReference type="ChEBI" id="CHEBI:37563"/>
        <note>allosteric inhibitor</note>
    </ligand>
</feature>
<feature type="binding site" evidence="1">
    <location>
        <begin position="186"/>
        <end position="191"/>
    </location>
    <ligand>
        <name>UTP</name>
        <dbReference type="ChEBI" id="CHEBI:46398"/>
    </ligand>
</feature>
<feature type="binding site" evidence="1">
    <location>
        <position position="222"/>
    </location>
    <ligand>
        <name>CTP</name>
        <dbReference type="ChEBI" id="CHEBI:37563"/>
        <note>allosteric inhibitor</note>
    </ligand>
</feature>
<feature type="binding site" evidence="1">
    <location>
        <position position="222"/>
    </location>
    <ligand>
        <name>UTP</name>
        <dbReference type="ChEBI" id="CHEBI:46398"/>
    </ligand>
</feature>
<feature type="binding site" evidence="1">
    <location>
        <position position="351"/>
    </location>
    <ligand>
        <name>L-glutamine</name>
        <dbReference type="ChEBI" id="CHEBI:58359"/>
    </ligand>
</feature>
<feature type="binding site" evidence="1">
    <location>
        <begin position="379"/>
        <end position="382"/>
    </location>
    <ligand>
        <name>L-glutamine</name>
        <dbReference type="ChEBI" id="CHEBI:58359"/>
    </ligand>
</feature>
<feature type="binding site" evidence="1">
    <location>
        <position position="402"/>
    </location>
    <ligand>
        <name>L-glutamine</name>
        <dbReference type="ChEBI" id="CHEBI:58359"/>
    </ligand>
</feature>
<feature type="binding site" evidence="1">
    <location>
        <position position="459"/>
    </location>
    <ligand>
        <name>L-glutamine</name>
        <dbReference type="ChEBI" id="CHEBI:58359"/>
    </ligand>
</feature>
<comment type="function">
    <text evidence="1">Catalyzes the ATP-dependent amination of UTP to CTP with either L-glutamine or ammonia as the source of nitrogen. Regulates intracellular CTP levels through interactions with the four ribonucleotide triphosphates.</text>
</comment>
<comment type="catalytic activity">
    <reaction evidence="1">
        <text>UTP + L-glutamine + ATP + H2O = CTP + L-glutamate + ADP + phosphate + 2 H(+)</text>
        <dbReference type="Rhea" id="RHEA:26426"/>
        <dbReference type="ChEBI" id="CHEBI:15377"/>
        <dbReference type="ChEBI" id="CHEBI:15378"/>
        <dbReference type="ChEBI" id="CHEBI:29985"/>
        <dbReference type="ChEBI" id="CHEBI:30616"/>
        <dbReference type="ChEBI" id="CHEBI:37563"/>
        <dbReference type="ChEBI" id="CHEBI:43474"/>
        <dbReference type="ChEBI" id="CHEBI:46398"/>
        <dbReference type="ChEBI" id="CHEBI:58359"/>
        <dbReference type="ChEBI" id="CHEBI:456216"/>
        <dbReference type="EC" id="6.3.4.2"/>
    </reaction>
</comment>
<comment type="catalytic activity">
    <reaction evidence="1">
        <text>L-glutamine + H2O = L-glutamate + NH4(+)</text>
        <dbReference type="Rhea" id="RHEA:15889"/>
        <dbReference type="ChEBI" id="CHEBI:15377"/>
        <dbReference type="ChEBI" id="CHEBI:28938"/>
        <dbReference type="ChEBI" id="CHEBI:29985"/>
        <dbReference type="ChEBI" id="CHEBI:58359"/>
    </reaction>
</comment>
<comment type="catalytic activity">
    <reaction evidence="1">
        <text>UTP + NH4(+) + ATP = CTP + ADP + phosphate + 2 H(+)</text>
        <dbReference type="Rhea" id="RHEA:16597"/>
        <dbReference type="ChEBI" id="CHEBI:15378"/>
        <dbReference type="ChEBI" id="CHEBI:28938"/>
        <dbReference type="ChEBI" id="CHEBI:30616"/>
        <dbReference type="ChEBI" id="CHEBI:37563"/>
        <dbReference type="ChEBI" id="CHEBI:43474"/>
        <dbReference type="ChEBI" id="CHEBI:46398"/>
        <dbReference type="ChEBI" id="CHEBI:456216"/>
    </reaction>
</comment>
<comment type="activity regulation">
    <text evidence="1">Allosterically activated by GTP, when glutamine is the substrate; GTP has no effect on the reaction when ammonia is the substrate. The allosteric effector GTP functions by stabilizing the protein conformation that binds the tetrahedral intermediate(s) formed during glutamine hydrolysis. Inhibited by the product CTP, via allosteric rather than competitive inhibition.</text>
</comment>
<comment type="pathway">
    <text evidence="1">Pyrimidine metabolism; CTP biosynthesis via de novo pathway; CTP from UDP: step 2/2.</text>
</comment>
<comment type="subunit">
    <text evidence="1">Homotetramer.</text>
</comment>
<comment type="miscellaneous">
    <text evidence="1">CTPSs have evolved a hybrid strategy for distinguishing between UTP and CTP. The overlapping regions of the product feedback inhibitory and substrate sites recognize a common feature in both compounds, the triphosphate moiety. To differentiate isosteric substrate and product pyrimidine rings, an additional pocket far from the expected kinase/ligase catalytic site, specifically recognizes the cytosine and ribose portions of the product inhibitor.</text>
</comment>
<comment type="similarity">
    <text evidence="1">Belongs to the CTP synthase family.</text>
</comment>
<comment type="sequence caution" evidence="2">
    <conflict type="erroneous initiation">
        <sequence resource="EMBL-CDS" id="BAA30911"/>
    </conflict>
</comment>
<sequence length="537" mass="60803">MTKFIFVTGGVVSGLGKGITSASIGLLMKARGYKTTNIKIDPYINYDAGTMNPYQHGEVFVLDDGGEVDLDLGNYERFLDTNLTFEHNITTGKVYSTVIEKERRGEYLGATVQVIPHITDEIKRRIREIAKDYDIVVVEIGGTVGDIESMPFLEAARQMQLEEGRENVAFVHVTYVPKLKVVGEQKTKPTQHSVKELRSLGIQPDAIVARSEDPLEEEARKKISLFTNVPREAVVSAYDVEDTYEVPLLLEREGLGKYLIKRLKLEDREPDLREWEKMVAKYKALKETVEIAIVGKYVKLTDSYLSIKEALKHASVSNDVKVKIRWIEAEDIEEHGTKLLEGVDGIIVPGGFGARGAEGKIMTIKYARENDIPFLGICFGFQLTVVEFARNVLGMKGAHSTEIDPQTPYPVVDLMPEQRNLEKLGGTMRLGAYPVKIKKGTLAYRLYKKELVYERHRHRWEVNPDYIEAFEKAGLVFSGVAGDDERRMEILELPDKRYFIATQFHPEFKSRPMRPAPVFHGLVRAAKEYKQEKNATN</sequence>
<reference key="1">
    <citation type="journal article" date="1998" name="DNA Res.">
        <title>Complete sequence and gene organization of the genome of a hyper-thermophilic archaebacterium, Pyrococcus horikoshii OT3.</title>
        <authorList>
            <person name="Kawarabayasi Y."/>
            <person name="Sawada M."/>
            <person name="Horikawa H."/>
            <person name="Haikawa Y."/>
            <person name="Hino Y."/>
            <person name="Yamamoto S."/>
            <person name="Sekine M."/>
            <person name="Baba S."/>
            <person name="Kosugi H."/>
            <person name="Hosoyama A."/>
            <person name="Nagai Y."/>
            <person name="Sakai M."/>
            <person name="Ogura K."/>
            <person name="Otsuka R."/>
            <person name="Nakazawa H."/>
            <person name="Takamiya M."/>
            <person name="Ohfuku Y."/>
            <person name="Funahashi T."/>
            <person name="Tanaka T."/>
            <person name="Kudoh Y."/>
            <person name="Yamazaki J."/>
            <person name="Kushida N."/>
            <person name="Oguchi A."/>
            <person name="Aoki K."/>
            <person name="Yoshizawa T."/>
            <person name="Nakamura Y."/>
            <person name="Robb F.T."/>
            <person name="Horikoshi K."/>
            <person name="Masuchi Y."/>
            <person name="Shizuya H."/>
            <person name="Kikuchi H."/>
        </authorList>
    </citation>
    <scope>NUCLEOTIDE SEQUENCE [LARGE SCALE GENOMIC DNA]</scope>
    <source>
        <strain>ATCC 700860 / DSM 12428 / JCM 9974 / NBRC 100139 / OT-3</strain>
    </source>
</reference>
<protein>
    <recommendedName>
        <fullName evidence="1">CTP synthase</fullName>
        <ecNumber evidence="1">6.3.4.2</ecNumber>
    </recommendedName>
    <alternativeName>
        <fullName evidence="1">Cytidine 5'-triphosphate synthase</fullName>
    </alternativeName>
    <alternativeName>
        <fullName evidence="1">Cytidine triphosphate synthetase</fullName>
        <shortName evidence="1">CTP synthetase</shortName>
        <shortName evidence="1">CTPS</shortName>
    </alternativeName>
    <alternativeName>
        <fullName evidence="1">UTP--ammonia ligase</fullName>
    </alternativeName>
</protein>
<gene>
    <name evidence="1" type="primary">pyrG</name>
    <name type="ordered locus">PH1792</name>
</gene>
<name>PYRG_PYRHO</name>
<keyword id="KW-0067">ATP-binding</keyword>
<keyword id="KW-0315">Glutamine amidotransferase</keyword>
<keyword id="KW-0436">Ligase</keyword>
<keyword id="KW-0460">Magnesium</keyword>
<keyword id="KW-0479">Metal-binding</keyword>
<keyword id="KW-0547">Nucleotide-binding</keyword>
<keyword id="KW-0665">Pyrimidine biosynthesis</keyword>
<evidence type="ECO:0000255" key="1">
    <source>
        <dbReference type="HAMAP-Rule" id="MF_01227"/>
    </source>
</evidence>
<evidence type="ECO:0000305" key="2"/>
<accession>O59456</accession>
<proteinExistence type="inferred from homology"/>